<keyword id="KW-0030">Aminoacyl-tRNA synthetase</keyword>
<keyword id="KW-0067">ATP-binding</keyword>
<keyword id="KW-0963">Cytoplasm</keyword>
<keyword id="KW-0436">Ligase</keyword>
<keyword id="KW-0479">Metal-binding</keyword>
<keyword id="KW-0547">Nucleotide-binding</keyword>
<keyword id="KW-0648">Protein biosynthesis</keyword>
<keyword id="KW-1185">Reference proteome</keyword>
<keyword id="KW-0862">Zinc</keyword>
<reference key="1">
    <citation type="journal article" date="2005" name="Nat. Biotechnol.">
        <title>Complete genome sequence of the acetic acid bacterium Gluconobacter oxydans.</title>
        <authorList>
            <person name="Prust C."/>
            <person name="Hoffmeister M."/>
            <person name="Liesegang H."/>
            <person name="Wiezer A."/>
            <person name="Fricke W.F."/>
            <person name="Ehrenreich A."/>
            <person name="Gottschalk G."/>
            <person name="Deppenmeier U."/>
        </authorList>
    </citation>
    <scope>NUCLEOTIDE SEQUENCE [LARGE SCALE GENOMIC DNA]</scope>
    <source>
        <strain>621H</strain>
    </source>
</reference>
<protein>
    <recommendedName>
        <fullName evidence="1">Isoleucine--tRNA ligase</fullName>
        <ecNumber evidence="1">6.1.1.5</ecNumber>
    </recommendedName>
    <alternativeName>
        <fullName evidence="1">Isoleucyl-tRNA synthetase</fullName>
        <shortName evidence="1">IleRS</shortName>
    </alternativeName>
</protein>
<proteinExistence type="inferred from homology"/>
<gene>
    <name evidence="1" type="primary">ileS</name>
    <name type="ordered locus">GOX1249</name>
</gene>
<feature type="chain" id="PRO_0000098393" description="Isoleucine--tRNA ligase">
    <location>
        <begin position="1"/>
        <end position="960"/>
    </location>
</feature>
<feature type="short sequence motif" description="'HIGH' region">
    <location>
        <begin position="82"/>
        <end position="92"/>
    </location>
</feature>
<feature type="short sequence motif" description="'KMSKS' region">
    <location>
        <begin position="647"/>
        <end position="651"/>
    </location>
</feature>
<feature type="binding site" evidence="1">
    <location>
        <position position="606"/>
    </location>
    <ligand>
        <name>L-isoleucyl-5'-AMP</name>
        <dbReference type="ChEBI" id="CHEBI:178002"/>
    </ligand>
</feature>
<feature type="binding site" evidence="1">
    <location>
        <position position="650"/>
    </location>
    <ligand>
        <name>ATP</name>
        <dbReference type="ChEBI" id="CHEBI:30616"/>
    </ligand>
</feature>
<feature type="binding site" evidence="1">
    <location>
        <position position="931"/>
    </location>
    <ligand>
        <name>Zn(2+)</name>
        <dbReference type="ChEBI" id="CHEBI:29105"/>
    </ligand>
</feature>
<feature type="binding site" evidence="1">
    <location>
        <position position="934"/>
    </location>
    <ligand>
        <name>Zn(2+)</name>
        <dbReference type="ChEBI" id="CHEBI:29105"/>
    </ligand>
</feature>
<feature type="binding site" evidence="1">
    <location>
        <position position="951"/>
    </location>
    <ligand>
        <name>Zn(2+)</name>
        <dbReference type="ChEBI" id="CHEBI:29105"/>
    </ligand>
</feature>
<feature type="binding site" evidence="1">
    <location>
        <position position="954"/>
    </location>
    <ligand>
        <name>Zn(2+)</name>
        <dbReference type="ChEBI" id="CHEBI:29105"/>
    </ligand>
</feature>
<sequence>MTETGSSLMSDKTPDPSVAAFKEQQDRYRDTVFLPRTGFPMRGGLPKREPETLARWAATGLDEKIREAGKGRPVFTLHDGPPYANGHIHIGHALNKVMKDVINRAHRMSGYEVRYLPGWDCHGLPIEWRIEEQYRKAGKDKDQVPLLQFRAECRQYAAQWVQKQAEDFKRIGVQAEWANRYVTMDFSSEAKIVDEIGKFLLNGSLYRGLRPVMWSPVEKTALAEAEIEYHDIDSTTIFVAFPIIKDPTPAHALNGVSAVIWTTTPWTIPANRALAYGPDITYVVLRVDETNENSVVPQGAKLLVAEDRVDAFCTETGITAHHILYTLPGNGLEGAVCAHPLRGRGYEYDVPMLPGDFVTTDAGTGLVHMAPSHGQDDFMLCRQYGIEVPELVQDDGRYAPWVPHLAGIHVFKAADPVCDLLTEARQSAEHDDAPATGLMARGTVRHSYPHSWRSKAPIIFRATPQWFIAMDGETKLREKSLSALDNVTFVPEAARRRLTSMIEQRPDWCISRQRAWGVPIAVFVEKRTGEVLRDAAVMQRIVEAFREKGADIWYEADPSLFLGEGRNPADYEQVFDIVDVWFESGSTHRFDLGQEGLNFPADLYLEGSDQHRGWFQSSLLESVGTMGVAPYKALVTNGFVMDEQGRKMSKSLGNVVAPSDVTESLGADILRLWVLNSDTNEDLRIGQDILKQQGELYRRLRNTLRWLLGALDGFTPEEAVSYADLPPLEQYILHRLTELRGLIASAVETHQWVGVYPALHGFCTTDLSAFYFDIRKDAIYCDAPSDPTRRAARTVLDALHRALCTWLAPVLVFTAEEAWQARFGEDDSVHLAQFFEPEAEWNDPELGNRWEDIRAYRRLITTELETARRDGTIGSSLEASVTLPLSQEEAGIFGGLDWAELLITSHAETELLPGDTAHGGPQVERAPGHKCARCWKVLPEVGENTEHPALCRRCIDVVSA</sequence>
<accession>Q5FRI6</accession>
<organism>
    <name type="scientific">Gluconobacter oxydans (strain 621H)</name>
    <name type="common">Gluconobacter suboxydans</name>
    <dbReference type="NCBI Taxonomy" id="290633"/>
    <lineage>
        <taxon>Bacteria</taxon>
        <taxon>Pseudomonadati</taxon>
        <taxon>Pseudomonadota</taxon>
        <taxon>Alphaproteobacteria</taxon>
        <taxon>Acetobacterales</taxon>
        <taxon>Acetobacteraceae</taxon>
        <taxon>Gluconobacter</taxon>
    </lineage>
</organism>
<evidence type="ECO:0000255" key="1">
    <source>
        <dbReference type="HAMAP-Rule" id="MF_02002"/>
    </source>
</evidence>
<dbReference type="EC" id="6.1.1.5" evidence="1"/>
<dbReference type="EMBL" id="CP000009">
    <property type="protein sequence ID" value="AAW61010.1"/>
    <property type="molecule type" value="Genomic_DNA"/>
</dbReference>
<dbReference type="SMR" id="Q5FRI6"/>
<dbReference type="STRING" id="290633.GOX1249"/>
<dbReference type="KEGG" id="gox:GOX1249"/>
<dbReference type="eggNOG" id="COG0060">
    <property type="taxonomic scope" value="Bacteria"/>
</dbReference>
<dbReference type="HOGENOM" id="CLU_001493_7_1_5"/>
<dbReference type="Proteomes" id="UP000006375">
    <property type="component" value="Chromosome"/>
</dbReference>
<dbReference type="GO" id="GO:0005829">
    <property type="term" value="C:cytosol"/>
    <property type="evidence" value="ECO:0007669"/>
    <property type="project" value="TreeGrafter"/>
</dbReference>
<dbReference type="GO" id="GO:0002161">
    <property type="term" value="F:aminoacyl-tRNA deacylase activity"/>
    <property type="evidence" value="ECO:0007669"/>
    <property type="project" value="InterPro"/>
</dbReference>
<dbReference type="GO" id="GO:0005524">
    <property type="term" value="F:ATP binding"/>
    <property type="evidence" value="ECO:0007669"/>
    <property type="project" value="UniProtKB-UniRule"/>
</dbReference>
<dbReference type="GO" id="GO:0004822">
    <property type="term" value="F:isoleucine-tRNA ligase activity"/>
    <property type="evidence" value="ECO:0007669"/>
    <property type="project" value="UniProtKB-UniRule"/>
</dbReference>
<dbReference type="GO" id="GO:0000049">
    <property type="term" value="F:tRNA binding"/>
    <property type="evidence" value="ECO:0007669"/>
    <property type="project" value="InterPro"/>
</dbReference>
<dbReference type="GO" id="GO:0008270">
    <property type="term" value="F:zinc ion binding"/>
    <property type="evidence" value="ECO:0007669"/>
    <property type="project" value="UniProtKB-UniRule"/>
</dbReference>
<dbReference type="GO" id="GO:0006428">
    <property type="term" value="P:isoleucyl-tRNA aminoacylation"/>
    <property type="evidence" value="ECO:0007669"/>
    <property type="project" value="UniProtKB-UniRule"/>
</dbReference>
<dbReference type="CDD" id="cd07960">
    <property type="entry name" value="Anticodon_Ia_Ile_BEm"/>
    <property type="match status" value="1"/>
</dbReference>
<dbReference type="Gene3D" id="1.10.730.20">
    <property type="match status" value="1"/>
</dbReference>
<dbReference type="Gene3D" id="3.40.50.620">
    <property type="entry name" value="HUPs"/>
    <property type="match status" value="2"/>
</dbReference>
<dbReference type="Gene3D" id="1.10.10.830">
    <property type="entry name" value="Ile-tRNA synthetase CP2 domain-like"/>
    <property type="match status" value="1"/>
</dbReference>
<dbReference type="Gene3D" id="3.90.740.10">
    <property type="entry name" value="Valyl/Leucyl/Isoleucyl-tRNA synthetase, editing domain"/>
    <property type="match status" value="1"/>
</dbReference>
<dbReference type="HAMAP" id="MF_02002">
    <property type="entry name" value="Ile_tRNA_synth_type1"/>
    <property type="match status" value="1"/>
</dbReference>
<dbReference type="InterPro" id="IPR001412">
    <property type="entry name" value="aa-tRNA-synth_I_CS"/>
</dbReference>
<dbReference type="InterPro" id="IPR002300">
    <property type="entry name" value="aa-tRNA-synth_Ia"/>
</dbReference>
<dbReference type="InterPro" id="IPR033708">
    <property type="entry name" value="Anticodon_Ile_BEm"/>
</dbReference>
<dbReference type="InterPro" id="IPR002301">
    <property type="entry name" value="Ile-tRNA-ligase"/>
</dbReference>
<dbReference type="InterPro" id="IPR023585">
    <property type="entry name" value="Ile-tRNA-ligase_type1"/>
</dbReference>
<dbReference type="InterPro" id="IPR050081">
    <property type="entry name" value="Ile-tRNA_ligase"/>
</dbReference>
<dbReference type="InterPro" id="IPR013155">
    <property type="entry name" value="M/V/L/I-tRNA-synth_anticd-bd"/>
</dbReference>
<dbReference type="InterPro" id="IPR014729">
    <property type="entry name" value="Rossmann-like_a/b/a_fold"/>
</dbReference>
<dbReference type="InterPro" id="IPR009080">
    <property type="entry name" value="tRNAsynth_Ia_anticodon-bd"/>
</dbReference>
<dbReference type="InterPro" id="IPR009008">
    <property type="entry name" value="Val/Leu/Ile-tRNA-synth_edit"/>
</dbReference>
<dbReference type="InterPro" id="IPR010663">
    <property type="entry name" value="Znf_FPG/IleRS"/>
</dbReference>
<dbReference type="NCBIfam" id="TIGR00392">
    <property type="entry name" value="ileS"/>
    <property type="match status" value="1"/>
</dbReference>
<dbReference type="PANTHER" id="PTHR42765:SF1">
    <property type="entry name" value="ISOLEUCINE--TRNA LIGASE, MITOCHONDRIAL"/>
    <property type="match status" value="1"/>
</dbReference>
<dbReference type="PANTHER" id="PTHR42765">
    <property type="entry name" value="SOLEUCYL-TRNA SYNTHETASE"/>
    <property type="match status" value="1"/>
</dbReference>
<dbReference type="Pfam" id="PF08264">
    <property type="entry name" value="Anticodon_1"/>
    <property type="match status" value="1"/>
</dbReference>
<dbReference type="Pfam" id="PF00133">
    <property type="entry name" value="tRNA-synt_1"/>
    <property type="match status" value="1"/>
</dbReference>
<dbReference type="Pfam" id="PF06827">
    <property type="entry name" value="zf-FPG_IleRS"/>
    <property type="match status" value="1"/>
</dbReference>
<dbReference type="PRINTS" id="PR00984">
    <property type="entry name" value="TRNASYNTHILE"/>
</dbReference>
<dbReference type="SUPFAM" id="SSF47323">
    <property type="entry name" value="Anticodon-binding domain of a subclass of class I aminoacyl-tRNA synthetases"/>
    <property type="match status" value="1"/>
</dbReference>
<dbReference type="SUPFAM" id="SSF52374">
    <property type="entry name" value="Nucleotidylyl transferase"/>
    <property type="match status" value="1"/>
</dbReference>
<dbReference type="SUPFAM" id="SSF50677">
    <property type="entry name" value="ValRS/IleRS/LeuRS editing domain"/>
    <property type="match status" value="1"/>
</dbReference>
<dbReference type="PROSITE" id="PS00178">
    <property type="entry name" value="AA_TRNA_LIGASE_I"/>
    <property type="match status" value="1"/>
</dbReference>
<name>SYI_GLUOX</name>
<comment type="function">
    <text evidence="1">Catalyzes the attachment of isoleucine to tRNA(Ile). As IleRS can inadvertently accommodate and process structurally similar amino acids such as valine, to avoid such errors it has two additional distinct tRNA(Ile)-dependent editing activities. One activity is designated as 'pretransfer' editing and involves the hydrolysis of activated Val-AMP. The other activity is designated 'posttransfer' editing and involves deacylation of mischarged Val-tRNA(Ile).</text>
</comment>
<comment type="catalytic activity">
    <reaction evidence="1">
        <text>tRNA(Ile) + L-isoleucine + ATP = L-isoleucyl-tRNA(Ile) + AMP + diphosphate</text>
        <dbReference type="Rhea" id="RHEA:11060"/>
        <dbReference type="Rhea" id="RHEA-COMP:9666"/>
        <dbReference type="Rhea" id="RHEA-COMP:9695"/>
        <dbReference type="ChEBI" id="CHEBI:30616"/>
        <dbReference type="ChEBI" id="CHEBI:33019"/>
        <dbReference type="ChEBI" id="CHEBI:58045"/>
        <dbReference type="ChEBI" id="CHEBI:78442"/>
        <dbReference type="ChEBI" id="CHEBI:78528"/>
        <dbReference type="ChEBI" id="CHEBI:456215"/>
        <dbReference type="EC" id="6.1.1.5"/>
    </reaction>
</comment>
<comment type="cofactor">
    <cofactor evidence="1">
        <name>Zn(2+)</name>
        <dbReference type="ChEBI" id="CHEBI:29105"/>
    </cofactor>
    <text evidence="1">Binds 1 zinc ion per subunit.</text>
</comment>
<comment type="subunit">
    <text evidence="1">Monomer.</text>
</comment>
<comment type="subcellular location">
    <subcellularLocation>
        <location evidence="1">Cytoplasm</location>
    </subcellularLocation>
</comment>
<comment type="domain">
    <text evidence="1">IleRS has two distinct active sites: one for aminoacylation and one for editing. The misactivated valine is translocated from the active site to the editing site, which sterically excludes the correctly activated isoleucine. The single editing site contains two valyl binding pockets, one specific for each substrate (Val-AMP or Val-tRNA(Ile)).</text>
</comment>
<comment type="similarity">
    <text evidence="1">Belongs to the class-I aminoacyl-tRNA synthetase family. IleS type 1 subfamily.</text>
</comment>